<protein>
    <recommendedName>
        <fullName evidence="1">Large ribosomal subunit protein eL32</fullName>
    </recommendedName>
    <alternativeName>
        <fullName>50S ribosomal protein L32e</fullName>
    </alternativeName>
</protein>
<gene>
    <name type="primary">rpl32e</name>
    <name type="ordered locus">AF_1908</name>
</gene>
<dbReference type="EMBL" id="AE000782">
    <property type="protein sequence ID" value="AAB89358.1"/>
    <property type="molecule type" value="Genomic_DNA"/>
</dbReference>
<dbReference type="PIR" id="C69488">
    <property type="entry name" value="C69488"/>
</dbReference>
<dbReference type="RefSeq" id="WP_010879401.1">
    <property type="nucleotide sequence ID" value="NC_000917.1"/>
</dbReference>
<dbReference type="SMR" id="O28371"/>
<dbReference type="STRING" id="224325.AF_1908"/>
<dbReference type="PaxDb" id="224325-AF_1908"/>
<dbReference type="EnsemblBacteria" id="AAB89358">
    <property type="protein sequence ID" value="AAB89358"/>
    <property type="gene ID" value="AF_1908"/>
</dbReference>
<dbReference type="KEGG" id="afu:AF_1908"/>
<dbReference type="eggNOG" id="arCOG00781">
    <property type="taxonomic scope" value="Archaea"/>
</dbReference>
<dbReference type="HOGENOM" id="CLU_071479_3_1_2"/>
<dbReference type="OrthoDB" id="372100at2157"/>
<dbReference type="PhylomeDB" id="O28371"/>
<dbReference type="Proteomes" id="UP000002199">
    <property type="component" value="Chromosome"/>
</dbReference>
<dbReference type="GO" id="GO:0022625">
    <property type="term" value="C:cytosolic large ribosomal subunit"/>
    <property type="evidence" value="ECO:0007669"/>
    <property type="project" value="TreeGrafter"/>
</dbReference>
<dbReference type="GO" id="GO:0003735">
    <property type="term" value="F:structural constituent of ribosome"/>
    <property type="evidence" value="ECO:0007669"/>
    <property type="project" value="InterPro"/>
</dbReference>
<dbReference type="GO" id="GO:0006412">
    <property type="term" value="P:translation"/>
    <property type="evidence" value="ECO:0007669"/>
    <property type="project" value="UniProtKB-UniRule"/>
</dbReference>
<dbReference type="CDD" id="cd00513">
    <property type="entry name" value="Ribosomal_L32_L32e"/>
    <property type="match status" value="1"/>
</dbReference>
<dbReference type="HAMAP" id="MF_00810">
    <property type="entry name" value="Ribosomal_eL32"/>
    <property type="match status" value="1"/>
</dbReference>
<dbReference type="InterPro" id="IPR001515">
    <property type="entry name" value="Ribosomal_eL32"/>
</dbReference>
<dbReference type="InterPro" id="IPR023654">
    <property type="entry name" value="Ribosomal_eL32_arc"/>
</dbReference>
<dbReference type="InterPro" id="IPR018263">
    <property type="entry name" value="Ribosomal_eL32_CS"/>
</dbReference>
<dbReference type="InterPro" id="IPR036351">
    <property type="entry name" value="Ribosomal_eL32_sf"/>
</dbReference>
<dbReference type="NCBIfam" id="NF006332">
    <property type="entry name" value="PRK08562.1"/>
    <property type="match status" value="1"/>
</dbReference>
<dbReference type="PANTHER" id="PTHR23413">
    <property type="entry name" value="60S RIBOSOMAL PROTEIN L32 AND DNA-DIRECTED RNA POLYMERASE II, SUBUNIT N"/>
    <property type="match status" value="1"/>
</dbReference>
<dbReference type="PANTHER" id="PTHR23413:SF1">
    <property type="entry name" value="RIBOSOMAL PROTEIN L32"/>
    <property type="match status" value="1"/>
</dbReference>
<dbReference type="Pfam" id="PF01655">
    <property type="entry name" value="Ribosomal_L32e"/>
    <property type="match status" value="1"/>
</dbReference>
<dbReference type="SMART" id="SM01393">
    <property type="entry name" value="Ribosomal_L32e"/>
    <property type="match status" value="1"/>
</dbReference>
<dbReference type="SUPFAM" id="SSF52042">
    <property type="entry name" value="Ribosomal protein L32e"/>
    <property type="match status" value="1"/>
</dbReference>
<dbReference type="PROSITE" id="PS00580">
    <property type="entry name" value="RIBOSOMAL_L32E"/>
    <property type="match status" value="1"/>
</dbReference>
<reference key="1">
    <citation type="journal article" date="1997" name="Nature">
        <title>The complete genome sequence of the hyperthermophilic, sulphate-reducing archaeon Archaeoglobus fulgidus.</title>
        <authorList>
            <person name="Klenk H.-P."/>
            <person name="Clayton R.A."/>
            <person name="Tomb J.-F."/>
            <person name="White O."/>
            <person name="Nelson K.E."/>
            <person name="Ketchum K.A."/>
            <person name="Dodson R.J."/>
            <person name="Gwinn M.L."/>
            <person name="Hickey E.K."/>
            <person name="Peterson J.D."/>
            <person name="Richardson D.L."/>
            <person name="Kerlavage A.R."/>
            <person name="Graham D.E."/>
            <person name="Kyrpides N.C."/>
            <person name="Fleischmann R.D."/>
            <person name="Quackenbush J."/>
            <person name="Lee N.H."/>
            <person name="Sutton G.G."/>
            <person name="Gill S.R."/>
            <person name="Kirkness E.F."/>
            <person name="Dougherty B.A."/>
            <person name="McKenney K."/>
            <person name="Adams M.D."/>
            <person name="Loftus B.J."/>
            <person name="Peterson S.N."/>
            <person name="Reich C.I."/>
            <person name="McNeil L.K."/>
            <person name="Badger J.H."/>
            <person name="Glodek A."/>
            <person name="Zhou L."/>
            <person name="Overbeek R."/>
            <person name="Gocayne J.D."/>
            <person name="Weidman J.F."/>
            <person name="McDonald L.A."/>
            <person name="Utterback T.R."/>
            <person name="Cotton M.D."/>
            <person name="Spriggs T."/>
            <person name="Artiach P."/>
            <person name="Kaine B.P."/>
            <person name="Sykes S.M."/>
            <person name="Sadow P.W."/>
            <person name="D'Andrea K.P."/>
            <person name="Bowman C."/>
            <person name="Fujii C."/>
            <person name="Garland S.A."/>
            <person name="Mason T.M."/>
            <person name="Olsen G.J."/>
            <person name="Fraser C.M."/>
            <person name="Smith H.O."/>
            <person name="Woese C.R."/>
            <person name="Venter J.C."/>
        </authorList>
    </citation>
    <scope>NUCLEOTIDE SEQUENCE [LARGE SCALE GENOMIC DNA]</scope>
    <source>
        <strain>ATCC 49558 / DSM 4304 / JCM 9628 / NBRC 100126 / VC-16</strain>
    </source>
</reference>
<feature type="chain" id="PRO_0000131147" description="Large ribosomal subunit protein eL32">
    <location>
        <begin position="1"/>
        <end position="129"/>
    </location>
</feature>
<evidence type="ECO:0000305" key="1"/>
<accession>O28371</accession>
<comment type="similarity">
    <text evidence="1">Belongs to the eukaryotic ribosomal protein eL32 family.</text>
</comment>
<sequence length="129" mass="15151">MEHKRLLKVRRRQKARKPEFRRYCWNKKLRLRNKSWRRPRGLFNKLRKRYGGKWSGRIPVNVGFGSPKAVRGLHPSGYEEVLVYNPADLEKIDKERQAVRIASCVGMKKRLAIEDKAKELGIKVLNPSG</sequence>
<organism>
    <name type="scientific">Archaeoglobus fulgidus (strain ATCC 49558 / DSM 4304 / JCM 9628 / NBRC 100126 / VC-16)</name>
    <dbReference type="NCBI Taxonomy" id="224325"/>
    <lineage>
        <taxon>Archaea</taxon>
        <taxon>Methanobacteriati</taxon>
        <taxon>Methanobacteriota</taxon>
        <taxon>Archaeoglobi</taxon>
        <taxon>Archaeoglobales</taxon>
        <taxon>Archaeoglobaceae</taxon>
        <taxon>Archaeoglobus</taxon>
    </lineage>
</organism>
<proteinExistence type="inferred from homology"/>
<keyword id="KW-1185">Reference proteome</keyword>
<keyword id="KW-0687">Ribonucleoprotein</keyword>
<keyword id="KW-0689">Ribosomal protein</keyword>
<name>RL32_ARCFU</name>